<protein>
    <recommendedName>
        <fullName evidence="1">DNA gyrase subunit A</fullName>
        <ecNumber evidence="1">5.6.2.2</ecNumber>
    </recommendedName>
</protein>
<organism>
    <name type="scientific">Dehalogenimonas lykanthroporepellens (strain ATCC BAA-1523 / JCM 15061 / BL-DC-9)</name>
    <dbReference type="NCBI Taxonomy" id="552811"/>
    <lineage>
        <taxon>Bacteria</taxon>
        <taxon>Bacillati</taxon>
        <taxon>Chloroflexota</taxon>
        <taxon>Dehalococcoidia</taxon>
        <taxon>Dehalococcoidales</taxon>
        <taxon>Dehalococcoidaceae</taxon>
        <taxon>Dehalogenimonas</taxon>
    </lineage>
</organism>
<dbReference type="EC" id="5.6.2.2" evidence="1"/>
<dbReference type="EMBL" id="CP002084">
    <property type="protein sequence ID" value="ADJ26663.1"/>
    <property type="molecule type" value="Genomic_DNA"/>
</dbReference>
<dbReference type="SMR" id="D8K235"/>
<dbReference type="STRING" id="552811.Dehly_1374"/>
<dbReference type="KEGG" id="dly:Dehly_1374"/>
<dbReference type="eggNOG" id="COG0188">
    <property type="taxonomic scope" value="Bacteria"/>
</dbReference>
<dbReference type="HOGENOM" id="CLU_002977_6_1_0"/>
<dbReference type="OrthoDB" id="9806486at2"/>
<dbReference type="GO" id="GO:0005694">
    <property type="term" value="C:chromosome"/>
    <property type="evidence" value="ECO:0007669"/>
    <property type="project" value="InterPro"/>
</dbReference>
<dbReference type="GO" id="GO:0005737">
    <property type="term" value="C:cytoplasm"/>
    <property type="evidence" value="ECO:0007669"/>
    <property type="project" value="UniProtKB-SubCell"/>
</dbReference>
<dbReference type="GO" id="GO:0009330">
    <property type="term" value="C:DNA topoisomerase type II (double strand cut, ATP-hydrolyzing) complex"/>
    <property type="evidence" value="ECO:0007669"/>
    <property type="project" value="TreeGrafter"/>
</dbReference>
<dbReference type="GO" id="GO:0005524">
    <property type="term" value="F:ATP binding"/>
    <property type="evidence" value="ECO:0007669"/>
    <property type="project" value="UniProtKB-UniRule"/>
</dbReference>
<dbReference type="GO" id="GO:0003677">
    <property type="term" value="F:DNA binding"/>
    <property type="evidence" value="ECO:0007669"/>
    <property type="project" value="UniProtKB-UniRule"/>
</dbReference>
<dbReference type="GO" id="GO:0034335">
    <property type="term" value="F:DNA negative supercoiling activity"/>
    <property type="evidence" value="ECO:0007669"/>
    <property type="project" value="UniProtKB-ARBA"/>
</dbReference>
<dbReference type="GO" id="GO:0006265">
    <property type="term" value="P:DNA topological change"/>
    <property type="evidence" value="ECO:0007669"/>
    <property type="project" value="UniProtKB-UniRule"/>
</dbReference>
<dbReference type="GO" id="GO:0006261">
    <property type="term" value="P:DNA-templated DNA replication"/>
    <property type="evidence" value="ECO:0007669"/>
    <property type="project" value="UniProtKB-UniRule"/>
</dbReference>
<dbReference type="CDD" id="cd00187">
    <property type="entry name" value="TOP4c"/>
    <property type="match status" value="1"/>
</dbReference>
<dbReference type="FunFam" id="1.10.268.10:FF:000001">
    <property type="entry name" value="DNA gyrase subunit A"/>
    <property type="match status" value="1"/>
</dbReference>
<dbReference type="FunFam" id="3.30.1360.40:FF:000002">
    <property type="entry name" value="DNA gyrase subunit A"/>
    <property type="match status" value="1"/>
</dbReference>
<dbReference type="FunFam" id="3.90.199.10:FF:000001">
    <property type="entry name" value="DNA gyrase subunit A"/>
    <property type="match status" value="1"/>
</dbReference>
<dbReference type="Gene3D" id="3.30.1360.40">
    <property type="match status" value="1"/>
</dbReference>
<dbReference type="Gene3D" id="2.120.10.90">
    <property type="entry name" value="DNA gyrase/topoisomerase IV, subunit A, C-terminal"/>
    <property type="match status" value="1"/>
</dbReference>
<dbReference type="Gene3D" id="3.90.199.10">
    <property type="entry name" value="Topoisomerase II, domain 5"/>
    <property type="match status" value="1"/>
</dbReference>
<dbReference type="Gene3D" id="1.10.268.10">
    <property type="entry name" value="Topoisomerase, domain 3"/>
    <property type="match status" value="1"/>
</dbReference>
<dbReference type="HAMAP" id="MF_01897">
    <property type="entry name" value="GyrA"/>
    <property type="match status" value="1"/>
</dbReference>
<dbReference type="InterPro" id="IPR005743">
    <property type="entry name" value="GyrA"/>
</dbReference>
<dbReference type="InterPro" id="IPR006691">
    <property type="entry name" value="GyrA/parC_rep"/>
</dbReference>
<dbReference type="InterPro" id="IPR035516">
    <property type="entry name" value="Gyrase/topoIV_suA_C"/>
</dbReference>
<dbReference type="InterPro" id="IPR013760">
    <property type="entry name" value="Topo_IIA-like_dom_sf"/>
</dbReference>
<dbReference type="InterPro" id="IPR013758">
    <property type="entry name" value="Topo_IIA_A/C_ab"/>
</dbReference>
<dbReference type="InterPro" id="IPR013757">
    <property type="entry name" value="Topo_IIA_A_a_sf"/>
</dbReference>
<dbReference type="InterPro" id="IPR002205">
    <property type="entry name" value="Topo_IIA_dom_A"/>
</dbReference>
<dbReference type="InterPro" id="IPR050220">
    <property type="entry name" value="Type_II_DNA_Topoisomerases"/>
</dbReference>
<dbReference type="NCBIfam" id="TIGR01063">
    <property type="entry name" value="gyrA"/>
    <property type="match status" value="1"/>
</dbReference>
<dbReference type="NCBIfam" id="TIGR01062">
    <property type="entry name" value="parC_Gneg"/>
    <property type="match status" value="1"/>
</dbReference>
<dbReference type="NCBIfam" id="NF004043">
    <property type="entry name" value="PRK05560.1"/>
    <property type="match status" value="1"/>
</dbReference>
<dbReference type="NCBIfam" id="NF004044">
    <property type="entry name" value="PRK05561.1"/>
    <property type="match status" value="1"/>
</dbReference>
<dbReference type="PANTHER" id="PTHR43493:SF5">
    <property type="entry name" value="DNA GYRASE SUBUNIT A, CHLOROPLASTIC_MITOCHONDRIAL"/>
    <property type="match status" value="1"/>
</dbReference>
<dbReference type="PANTHER" id="PTHR43493">
    <property type="entry name" value="DNA GYRASE/TOPOISOMERASE SUBUNIT A"/>
    <property type="match status" value="1"/>
</dbReference>
<dbReference type="Pfam" id="PF03989">
    <property type="entry name" value="DNA_gyraseA_C"/>
    <property type="match status" value="6"/>
</dbReference>
<dbReference type="Pfam" id="PF00521">
    <property type="entry name" value="DNA_topoisoIV"/>
    <property type="match status" value="1"/>
</dbReference>
<dbReference type="SMART" id="SM00434">
    <property type="entry name" value="TOP4c"/>
    <property type="match status" value="1"/>
</dbReference>
<dbReference type="SUPFAM" id="SSF101904">
    <property type="entry name" value="GyrA/ParC C-terminal domain-like"/>
    <property type="match status" value="1"/>
</dbReference>
<dbReference type="SUPFAM" id="SSF56719">
    <property type="entry name" value="Type II DNA topoisomerase"/>
    <property type="match status" value="1"/>
</dbReference>
<dbReference type="PROSITE" id="PS52040">
    <property type="entry name" value="TOPO_IIA"/>
    <property type="match status" value="1"/>
</dbReference>
<reference key="1">
    <citation type="submission" date="2010-06" db="EMBL/GenBank/DDBJ databases">
        <title>Complete sequence of Dehalogenimonas lykanthroporepellens BL-DC-9.</title>
        <authorList>
            <consortium name="US DOE Joint Genome Institute"/>
            <person name="Lucas S."/>
            <person name="Copeland A."/>
            <person name="Lapidus A."/>
            <person name="Cheng J.-F."/>
            <person name="Bruce D."/>
            <person name="Goodwin L."/>
            <person name="Pitluck S."/>
            <person name="Daligault H."/>
            <person name="Detter J.C."/>
            <person name="Han C."/>
            <person name="Tapia R."/>
            <person name="Land M."/>
            <person name="Hauser L."/>
            <person name="Kyrpides N."/>
            <person name="Ovchinnikova G."/>
            <person name="Rainey F.A."/>
            <person name="Yan J."/>
            <person name="da Costa M.S."/>
            <person name="Moe W.M."/>
            <person name="Woyke T."/>
        </authorList>
    </citation>
    <scope>NUCLEOTIDE SEQUENCE [LARGE SCALE GENOMIC DNA]</scope>
    <source>
        <strain>ATCC BAA-1523 / JCM 15061 / BL-DC-9</strain>
    </source>
</reference>
<feature type="chain" id="PRO_0000409823" description="DNA gyrase subunit A">
    <location>
        <begin position="1"/>
        <end position="814"/>
    </location>
</feature>
<feature type="domain" description="Topo IIA-type catalytic" evidence="2">
    <location>
        <begin position="32"/>
        <end position="499"/>
    </location>
</feature>
<feature type="short sequence motif" description="GyrA-box" evidence="1">
    <location>
        <begin position="526"/>
        <end position="532"/>
    </location>
</feature>
<feature type="active site" description="O-(5'-phospho-DNA)-tyrosine intermediate" evidence="1">
    <location>
        <position position="120"/>
    </location>
</feature>
<accession>D8K235</accession>
<comment type="function">
    <text evidence="1">A type II topoisomerase that negatively supercoils closed circular double-stranded (ds) DNA in an ATP-dependent manner to modulate DNA topology and maintain chromosomes in an underwound state. Negative supercoiling favors strand separation, and DNA replication, transcription, recombination and repair, all of which involve strand separation. Also able to catalyze the interconversion of other topological isomers of dsDNA rings, including catenanes and knotted rings. Type II topoisomerases break and join 2 DNA strands simultaneously in an ATP-dependent manner.</text>
</comment>
<comment type="catalytic activity">
    <reaction evidence="1">
        <text>ATP-dependent breakage, passage and rejoining of double-stranded DNA.</text>
        <dbReference type="EC" id="5.6.2.2"/>
    </reaction>
</comment>
<comment type="subunit">
    <text evidence="1">Heterotetramer, composed of two GyrA and two GyrB chains. In the heterotetramer, GyrA contains the active site tyrosine that forms a transient covalent intermediate with DNA, while GyrB binds cofactors and catalyzes ATP hydrolysis.</text>
</comment>
<comment type="subcellular location">
    <subcellularLocation>
        <location evidence="1">Cytoplasm</location>
    </subcellularLocation>
</comment>
<comment type="miscellaneous">
    <text evidence="1">Few gyrases are as efficient as E.coli at forming negative supercoils. Not all organisms have 2 type II topoisomerases; in organisms with a single type II topoisomerase this enzyme also has to decatenate newly replicated chromosomes.</text>
</comment>
<comment type="similarity">
    <text evidence="1">Belongs to the type II topoisomerase GyrA/ParC subunit family.</text>
</comment>
<gene>
    <name evidence="1" type="primary">gyrA</name>
    <name type="ordered locus">Dehly_1374</name>
</gene>
<keyword id="KW-0067">ATP-binding</keyword>
<keyword id="KW-0963">Cytoplasm</keyword>
<keyword id="KW-0238">DNA-binding</keyword>
<keyword id="KW-0413">Isomerase</keyword>
<keyword id="KW-0547">Nucleotide-binding</keyword>
<keyword id="KW-0799">Topoisomerase</keyword>
<name>GYRA_DEHLB</name>
<sequence length="814" mass="90330">MVIGNTRPINIEDEMKNSYMDYAMSVIVSRALPDVRDGLKPVHRRILYAMSDLGMHYNTSYKKSARIVGEVLGKYHPHGDSSVYDAMVRMAQNFSLRYMLVDGQGNFGSVDGDPPAAMRYTEARLTRLAGELLVDIDKDTVEFMPNFDDSLKEPTVLPSRLPVLLMNGASGIAVGMATNIPPHNLTELCDAISYLIDNPECGLEDLMQFVKGPDFPTGGLILGRDGIKSAYATGHGKVVVRARAHVADVAETGARRQIIISELPYQVNKADLVKRIAMLSRERKINGIAEVRDESDRQGLRVVIELKRDGEPQQILNNLYKHTNLQTSFFVNMLALVNNRPVVLNLKEALNHYVAFRQEIITRRSKFELKAARARAHILEGLKIALDNLDAIINLIRHAENADTARRELMSRFELSQLQAQAILDLQLRRLANLERQKILGEYADILKQISYLEDLLANPRKVLSLVKDDLAEVKARYGDARRTEIQSQGVIEFREEDLIPHQSMVVTLTERGFIKRVPTEVYRLQHRAGRGKSIIKTREADSVRFIMVADTHDSVLLFTNRGKIFSIKCHEIPCDLLRTAKGIAIINLVPLAENERITSMIAVSRFDEETSLIMATSGGECKRTKLSDFAAVRSSGLLAMDLPKNDELIGAVIAGADENIILITHNGRSIHFPVADLRVSQRASGGVRGITLEGDDRVAGLDVARPGHFVLVVTTGGYGKLTAVEEYPLQRRAGSGVLTFKVVDKTGKVAAGKVVDREHQVMIATAEGVVIRTPVGTEDQEKGIIVMGRSTQGVIVIRPDENDRVVNFATMVE</sequence>
<proteinExistence type="inferred from homology"/>
<evidence type="ECO:0000255" key="1">
    <source>
        <dbReference type="HAMAP-Rule" id="MF_01897"/>
    </source>
</evidence>
<evidence type="ECO:0000255" key="2">
    <source>
        <dbReference type="PROSITE-ProRule" id="PRU01384"/>
    </source>
</evidence>